<sequence>MKEIVIASNNQGKINDFKVIFPDYHVIGISELIPDFDVEETGSTFEENAILKSEAAAKALNKTVIADDSGLEVFALNGEPGIYSARYAGENKSDEANIEKLLNKLGNTTDRRAQFVCVISMSGPDMETKVFKGTVSGEIADGKYGENGFGYDPIFYVPKLDKTMAQLSKEQKGQISHRRNAINLLQAFLEGDKNV</sequence>
<organism>
    <name type="scientific">Staphylococcus aureus (strain MW2)</name>
    <dbReference type="NCBI Taxonomy" id="196620"/>
    <lineage>
        <taxon>Bacteria</taxon>
        <taxon>Bacillati</taxon>
        <taxon>Bacillota</taxon>
        <taxon>Bacilli</taxon>
        <taxon>Bacillales</taxon>
        <taxon>Staphylococcaceae</taxon>
        <taxon>Staphylococcus</taxon>
    </lineage>
</organism>
<name>IXTPA_STAAW</name>
<gene>
    <name type="ordered locus">MW1034</name>
</gene>
<evidence type="ECO:0000255" key="1">
    <source>
        <dbReference type="HAMAP-Rule" id="MF_01405"/>
    </source>
</evidence>
<accession>P58995</accession>
<accession>Q8NX54</accession>
<keyword id="KW-0378">Hydrolase</keyword>
<keyword id="KW-0460">Magnesium</keyword>
<keyword id="KW-0479">Metal-binding</keyword>
<keyword id="KW-0546">Nucleotide metabolism</keyword>
<keyword id="KW-0547">Nucleotide-binding</keyword>
<comment type="function">
    <text evidence="1">Pyrophosphatase that catalyzes the hydrolysis of nucleoside triphosphates to their monophosphate derivatives, with a high preference for the non-canonical purine nucleotides XTP (xanthosine triphosphate), dITP (deoxyinosine triphosphate) and ITP. Seems to function as a house-cleaning enzyme that removes non-canonical purine nucleotides from the nucleotide pool, thus preventing their incorporation into DNA/RNA and avoiding chromosomal lesions.</text>
</comment>
<comment type="catalytic activity">
    <reaction evidence="1">
        <text>XTP + H2O = XMP + diphosphate + H(+)</text>
        <dbReference type="Rhea" id="RHEA:28610"/>
        <dbReference type="ChEBI" id="CHEBI:15377"/>
        <dbReference type="ChEBI" id="CHEBI:15378"/>
        <dbReference type="ChEBI" id="CHEBI:33019"/>
        <dbReference type="ChEBI" id="CHEBI:57464"/>
        <dbReference type="ChEBI" id="CHEBI:61314"/>
        <dbReference type="EC" id="3.6.1.66"/>
    </reaction>
</comment>
<comment type="catalytic activity">
    <reaction evidence="1">
        <text>dITP + H2O = dIMP + diphosphate + H(+)</text>
        <dbReference type="Rhea" id="RHEA:28342"/>
        <dbReference type="ChEBI" id="CHEBI:15377"/>
        <dbReference type="ChEBI" id="CHEBI:15378"/>
        <dbReference type="ChEBI" id="CHEBI:33019"/>
        <dbReference type="ChEBI" id="CHEBI:61194"/>
        <dbReference type="ChEBI" id="CHEBI:61382"/>
        <dbReference type="EC" id="3.6.1.66"/>
    </reaction>
</comment>
<comment type="catalytic activity">
    <reaction evidence="1">
        <text>ITP + H2O = IMP + diphosphate + H(+)</text>
        <dbReference type="Rhea" id="RHEA:29399"/>
        <dbReference type="ChEBI" id="CHEBI:15377"/>
        <dbReference type="ChEBI" id="CHEBI:15378"/>
        <dbReference type="ChEBI" id="CHEBI:33019"/>
        <dbReference type="ChEBI" id="CHEBI:58053"/>
        <dbReference type="ChEBI" id="CHEBI:61402"/>
        <dbReference type="EC" id="3.6.1.66"/>
    </reaction>
</comment>
<comment type="cofactor">
    <cofactor evidence="1">
        <name>Mg(2+)</name>
        <dbReference type="ChEBI" id="CHEBI:18420"/>
    </cofactor>
    <text evidence="1">Binds 1 Mg(2+) ion per subunit.</text>
</comment>
<comment type="subunit">
    <text evidence="1">Homodimer.</text>
</comment>
<comment type="similarity">
    <text evidence="1">Belongs to the HAM1 NTPase family.</text>
</comment>
<feature type="chain" id="PRO_0000178232" description="dITP/XTP pyrophosphatase">
    <location>
        <begin position="1"/>
        <end position="195"/>
    </location>
</feature>
<feature type="active site" description="Proton acceptor" evidence="1">
    <location>
        <position position="68"/>
    </location>
</feature>
<feature type="binding site" evidence="1">
    <location>
        <begin position="8"/>
        <end position="13"/>
    </location>
    <ligand>
        <name>substrate</name>
    </ligand>
</feature>
<feature type="binding site" evidence="1">
    <location>
        <position position="39"/>
    </location>
    <ligand>
        <name>Mg(2+)</name>
        <dbReference type="ChEBI" id="CHEBI:18420"/>
    </ligand>
</feature>
<feature type="binding site" evidence="1">
    <location>
        <position position="68"/>
    </location>
    <ligand>
        <name>Mg(2+)</name>
        <dbReference type="ChEBI" id="CHEBI:18420"/>
    </ligand>
</feature>
<feature type="binding site" evidence="1">
    <location>
        <position position="69"/>
    </location>
    <ligand>
        <name>substrate</name>
    </ligand>
</feature>
<feature type="binding site" evidence="1">
    <location>
        <begin position="149"/>
        <end position="152"/>
    </location>
    <ligand>
        <name>substrate</name>
    </ligand>
</feature>
<feature type="binding site" evidence="1">
    <location>
        <position position="172"/>
    </location>
    <ligand>
        <name>substrate</name>
    </ligand>
</feature>
<feature type="binding site" evidence="1">
    <location>
        <begin position="177"/>
        <end position="178"/>
    </location>
    <ligand>
        <name>substrate</name>
    </ligand>
</feature>
<proteinExistence type="inferred from homology"/>
<dbReference type="EC" id="3.6.1.66" evidence="1"/>
<dbReference type="EMBL" id="BA000033">
    <property type="protein sequence ID" value="BAB94899.1"/>
    <property type="molecule type" value="Genomic_DNA"/>
</dbReference>
<dbReference type="RefSeq" id="WP_000659317.1">
    <property type="nucleotide sequence ID" value="NC_003923.1"/>
</dbReference>
<dbReference type="SMR" id="P58995"/>
<dbReference type="KEGG" id="sam:MW1034"/>
<dbReference type="HOGENOM" id="CLU_082080_0_2_9"/>
<dbReference type="GO" id="GO:0005829">
    <property type="term" value="C:cytosol"/>
    <property type="evidence" value="ECO:0007669"/>
    <property type="project" value="TreeGrafter"/>
</dbReference>
<dbReference type="GO" id="GO:0035870">
    <property type="term" value="F:dITP diphosphatase activity"/>
    <property type="evidence" value="ECO:0007669"/>
    <property type="project" value="RHEA"/>
</dbReference>
<dbReference type="GO" id="GO:0036220">
    <property type="term" value="F:ITP diphosphatase activity"/>
    <property type="evidence" value="ECO:0007669"/>
    <property type="project" value="UniProtKB-EC"/>
</dbReference>
<dbReference type="GO" id="GO:0046872">
    <property type="term" value="F:metal ion binding"/>
    <property type="evidence" value="ECO:0007669"/>
    <property type="project" value="UniProtKB-KW"/>
</dbReference>
<dbReference type="GO" id="GO:0000166">
    <property type="term" value="F:nucleotide binding"/>
    <property type="evidence" value="ECO:0007669"/>
    <property type="project" value="UniProtKB-KW"/>
</dbReference>
<dbReference type="GO" id="GO:0017111">
    <property type="term" value="F:ribonucleoside triphosphate phosphatase activity"/>
    <property type="evidence" value="ECO:0007669"/>
    <property type="project" value="InterPro"/>
</dbReference>
<dbReference type="GO" id="GO:0036222">
    <property type="term" value="F:XTP diphosphatase activity"/>
    <property type="evidence" value="ECO:0007669"/>
    <property type="project" value="RHEA"/>
</dbReference>
<dbReference type="GO" id="GO:0009117">
    <property type="term" value="P:nucleotide metabolic process"/>
    <property type="evidence" value="ECO:0007669"/>
    <property type="project" value="UniProtKB-KW"/>
</dbReference>
<dbReference type="GO" id="GO:0009146">
    <property type="term" value="P:purine nucleoside triphosphate catabolic process"/>
    <property type="evidence" value="ECO:0007669"/>
    <property type="project" value="UniProtKB-UniRule"/>
</dbReference>
<dbReference type="CDD" id="cd00515">
    <property type="entry name" value="HAM1"/>
    <property type="match status" value="1"/>
</dbReference>
<dbReference type="FunFam" id="3.90.950.10:FF:000001">
    <property type="entry name" value="dITP/XTP pyrophosphatase"/>
    <property type="match status" value="1"/>
</dbReference>
<dbReference type="Gene3D" id="3.90.950.10">
    <property type="match status" value="1"/>
</dbReference>
<dbReference type="HAMAP" id="MF_01405">
    <property type="entry name" value="Non_canon_purine_NTPase"/>
    <property type="match status" value="1"/>
</dbReference>
<dbReference type="InterPro" id="IPR020922">
    <property type="entry name" value="dITP/XTP_pyrophosphatase"/>
</dbReference>
<dbReference type="InterPro" id="IPR029001">
    <property type="entry name" value="ITPase-like_fam"/>
</dbReference>
<dbReference type="InterPro" id="IPR002637">
    <property type="entry name" value="RdgB/HAM1"/>
</dbReference>
<dbReference type="NCBIfam" id="NF011397">
    <property type="entry name" value="PRK14822.1"/>
    <property type="match status" value="1"/>
</dbReference>
<dbReference type="NCBIfam" id="TIGR00042">
    <property type="entry name" value="RdgB/HAM1 family non-canonical purine NTP pyrophosphatase"/>
    <property type="match status" value="1"/>
</dbReference>
<dbReference type="PANTHER" id="PTHR11067:SF9">
    <property type="entry name" value="INOSINE TRIPHOSPHATE PYROPHOSPHATASE"/>
    <property type="match status" value="1"/>
</dbReference>
<dbReference type="PANTHER" id="PTHR11067">
    <property type="entry name" value="INOSINE TRIPHOSPHATE PYROPHOSPHATASE/HAM1 PROTEIN"/>
    <property type="match status" value="1"/>
</dbReference>
<dbReference type="Pfam" id="PF01725">
    <property type="entry name" value="Ham1p_like"/>
    <property type="match status" value="1"/>
</dbReference>
<dbReference type="SUPFAM" id="SSF52972">
    <property type="entry name" value="ITPase-like"/>
    <property type="match status" value="1"/>
</dbReference>
<reference key="1">
    <citation type="journal article" date="2002" name="Lancet">
        <title>Genome and virulence determinants of high virulence community-acquired MRSA.</title>
        <authorList>
            <person name="Baba T."/>
            <person name="Takeuchi F."/>
            <person name="Kuroda M."/>
            <person name="Yuzawa H."/>
            <person name="Aoki K."/>
            <person name="Oguchi A."/>
            <person name="Nagai Y."/>
            <person name="Iwama N."/>
            <person name="Asano K."/>
            <person name="Naimi T."/>
            <person name="Kuroda H."/>
            <person name="Cui L."/>
            <person name="Yamamoto K."/>
            <person name="Hiramatsu K."/>
        </authorList>
    </citation>
    <scope>NUCLEOTIDE SEQUENCE [LARGE SCALE GENOMIC DNA]</scope>
    <source>
        <strain>MW2</strain>
    </source>
</reference>
<protein>
    <recommendedName>
        <fullName evidence="1">dITP/XTP pyrophosphatase</fullName>
        <ecNumber evidence="1">3.6.1.66</ecNumber>
    </recommendedName>
    <alternativeName>
        <fullName evidence="1">Non-canonical purine NTP pyrophosphatase</fullName>
    </alternativeName>
    <alternativeName>
        <fullName evidence="1">Non-standard purine NTP pyrophosphatase</fullName>
    </alternativeName>
    <alternativeName>
        <fullName evidence="1">Nucleoside-triphosphate diphosphatase</fullName>
    </alternativeName>
    <alternativeName>
        <fullName evidence="1">Nucleoside-triphosphate pyrophosphatase</fullName>
        <shortName evidence="1">NTPase</shortName>
    </alternativeName>
</protein>